<comment type="function">
    <text evidence="1">One of the early assembly proteins it binds 23S rRNA. One of the proteins that surrounds the polypeptide exit tunnel on the outside of the ribosome. Forms the main docking site for trigger factor binding to the ribosome.</text>
</comment>
<comment type="subunit">
    <text evidence="1">Part of the 50S ribosomal subunit. Contacts protein L29, and trigger factor when it is bound to the ribosome.</text>
</comment>
<comment type="similarity">
    <text evidence="1">Belongs to the universal ribosomal protein uL23 family.</text>
</comment>
<keyword id="KW-0687">Ribonucleoprotein</keyword>
<keyword id="KW-0689">Ribosomal protein</keyword>
<keyword id="KW-0694">RNA-binding</keyword>
<keyword id="KW-0699">rRNA-binding</keyword>
<proteinExistence type="inferred from homology"/>
<organism>
    <name type="scientific">Mycobacterium bovis (strain BCG / Tokyo 172 / ATCC 35737 / TMC 1019)</name>
    <dbReference type="NCBI Taxonomy" id="561275"/>
    <lineage>
        <taxon>Bacteria</taxon>
        <taxon>Bacillati</taxon>
        <taxon>Actinomycetota</taxon>
        <taxon>Actinomycetes</taxon>
        <taxon>Mycobacteriales</taxon>
        <taxon>Mycobacteriaceae</taxon>
        <taxon>Mycobacterium</taxon>
        <taxon>Mycobacterium tuberculosis complex</taxon>
    </lineage>
</organism>
<gene>
    <name evidence="1" type="primary">rplW</name>
    <name type="ordered locus">JTY_0723</name>
</gene>
<accession>C1AL37</accession>
<dbReference type="EMBL" id="AP010918">
    <property type="protein sequence ID" value="BAH25016.1"/>
    <property type="molecule type" value="Genomic_DNA"/>
</dbReference>
<dbReference type="RefSeq" id="WP_003403581.1">
    <property type="nucleotide sequence ID" value="NZ_CP014566.1"/>
</dbReference>
<dbReference type="SMR" id="C1AL37"/>
<dbReference type="KEGG" id="mbt:JTY_0723"/>
<dbReference type="HOGENOM" id="CLU_037562_3_2_11"/>
<dbReference type="GO" id="GO:1990904">
    <property type="term" value="C:ribonucleoprotein complex"/>
    <property type="evidence" value="ECO:0007669"/>
    <property type="project" value="UniProtKB-KW"/>
</dbReference>
<dbReference type="GO" id="GO:0005840">
    <property type="term" value="C:ribosome"/>
    <property type="evidence" value="ECO:0007669"/>
    <property type="project" value="UniProtKB-KW"/>
</dbReference>
<dbReference type="GO" id="GO:0019843">
    <property type="term" value="F:rRNA binding"/>
    <property type="evidence" value="ECO:0007669"/>
    <property type="project" value="UniProtKB-UniRule"/>
</dbReference>
<dbReference type="GO" id="GO:0003735">
    <property type="term" value="F:structural constituent of ribosome"/>
    <property type="evidence" value="ECO:0007669"/>
    <property type="project" value="InterPro"/>
</dbReference>
<dbReference type="GO" id="GO:0006412">
    <property type="term" value="P:translation"/>
    <property type="evidence" value="ECO:0007669"/>
    <property type="project" value="UniProtKB-UniRule"/>
</dbReference>
<dbReference type="FunFam" id="3.30.70.330:FF:000001">
    <property type="entry name" value="50S ribosomal protein L23"/>
    <property type="match status" value="1"/>
</dbReference>
<dbReference type="Gene3D" id="3.30.70.330">
    <property type="match status" value="1"/>
</dbReference>
<dbReference type="HAMAP" id="MF_01369_B">
    <property type="entry name" value="Ribosomal_uL23_B"/>
    <property type="match status" value="1"/>
</dbReference>
<dbReference type="InterPro" id="IPR012677">
    <property type="entry name" value="Nucleotide-bd_a/b_plait_sf"/>
</dbReference>
<dbReference type="InterPro" id="IPR013025">
    <property type="entry name" value="Ribosomal_uL23-like"/>
</dbReference>
<dbReference type="InterPro" id="IPR012678">
    <property type="entry name" value="Ribosomal_uL23/eL15/eS24_sf"/>
</dbReference>
<dbReference type="InterPro" id="IPR001014">
    <property type="entry name" value="Ribosomal_uL23_CS"/>
</dbReference>
<dbReference type="NCBIfam" id="NF004363">
    <property type="entry name" value="PRK05738.2-4"/>
    <property type="match status" value="1"/>
</dbReference>
<dbReference type="NCBIfam" id="NF004364">
    <property type="entry name" value="PRK05738.2-5"/>
    <property type="match status" value="1"/>
</dbReference>
<dbReference type="PANTHER" id="PTHR11620">
    <property type="entry name" value="60S RIBOSOMAL PROTEIN L23A"/>
    <property type="match status" value="1"/>
</dbReference>
<dbReference type="Pfam" id="PF00276">
    <property type="entry name" value="Ribosomal_L23"/>
    <property type="match status" value="1"/>
</dbReference>
<dbReference type="SUPFAM" id="SSF54189">
    <property type="entry name" value="Ribosomal proteins S24e, L23 and L15e"/>
    <property type="match status" value="1"/>
</dbReference>
<dbReference type="PROSITE" id="PS00050">
    <property type="entry name" value="RIBOSOMAL_L23"/>
    <property type="match status" value="1"/>
</dbReference>
<protein>
    <recommendedName>
        <fullName evidence="1">Large ribosomal subunit protein uL23</fullName>
    </recommendedName>
    <alternativeName>
        <fullName evidence="2">50S ribosomal protein L23</fullName>
    </alternativeName>
</protein>
<reference key="1">
    <citation type="journal article" date="2009" name="Vaccine">
        <title>Whole genome sequence analysis of Mycobacterium bovis bacillus Calmette-Guerin (BCG) Tokyo 172: a comparative study of BCG vaccine substrains.</title>
        <authorList>
            <person name="Seki M."/>
            <person name="Honda I."/>
            <person name="Fujita I."/>
            <person name="Yano I."/>
            <person name="Yamamoto S."/>
            <person name="Koyama A."/>
        </authorList>
    </citation>
    <scope>NUCLEOTIDE SEQUENCE [LARGE SCALE GENOMIC DNA]</scope>
    <source>
        <strain>BCG / Tokyo 172 / ATCC 35737 / TMC 1019</strain>
    </source>
</reference>
<sequence length="100" mass="10958">MATLADPRDIILAPVISEKSYGLLDDNVYTFLVRPDSNKTQIKIAVEKIFAVKVASVNTANRQGKRKRTRTGYGKRKSTKRAIVTLAPGSRPIDLFGAPA</sequence>
<evidence type="ECO:0000255" key="1">
    <source>
        <dbReference type="HAMAP-Rule" id="MF_01369"/>
    </source>
</evidence>
<evidence type="ECO:0000305" key="2"/>
<feature type="chain" id="PRO_1000184095" description="Large ribosomal subunit protein uL23">
    <location>
        <begin position="1"/>
        <end position="100"/>
    </location>
</feature>
<name>RL23_MYCBT</name>